<sequence>MHKLIAGVDEVGRGPLVGDVVTAAVILDPQNPIEGLTDSKKLSEKKRVALAQEIREKALYWNIGRASPEEIDKLNILHATMLAMIRAVEGLPVKPDFVRVDGNRLPAWNFDSEAVVKGDSLHAEISAASIIAKVERDNDMISLHEAFPQYNFAGHKGYPTKAHFEAIAEYGILDCYRKSFKPVKALLEEK</sequence>
<organism>
    <name type="scientific">Alteromonas mediterranea (strain DSM 17117 / CIP 110805 / LMG 28347 / Deep ecotype)</name>
    <dbReference type="NCBI Taxonomy" id="1774373"/>
    <lineage>
        <taxon>Bacteria</taxon>
        <taxon>Pseudomonadati</taxon>
        <taxon>Pseudomonadota</taxon>
        <taxon>Gammaproteobacteria</taxon>
        <taxon>Alteromonadales</taxon>
        <taxon>Alteromonadaceae</taxon>
        <taxon>Alteromonas/Salinimonas group</taxon>
        <taxon>Alteromonas</taxon>
    </lineage>
</organism>
<evidence type="ECO:0000255" key="1">
    <source>
        <dbReference type="HAMAP-Rule" id="MF_00052"/>
    </source>
</evidence>
<evidence type="ECO:0000255" key="2">
    <source>
        <dbReference type="PROSITE-ProRule" id="PRU01319"/>
    </source>
</evidence>
<keyword id="KW-0963">Cytoplasm</keyword>
<keyword id="KW-0255">Endonuclease</keyword>
<keyword id="KW-0378">Hydrolase</keyword>
<keyword id="KW-0464">Manganese</keyword>
<keyword id="KW-0479">Metal-binding</keyword>
<keyword id="KW-0540">Nuclease</keyword>
<gene>
    <name evidence="1" type="primary">rnhB</name>
    <name type="ordered locus">MADE_1005385</name>
</gene>
<comment type="function">
    <text evidence="1">Endonuclease that specifically degrades the RNA of RNA-DNA hybrids.</text>
</comment>
<comment type="catalytic activity">
    <reaction evidence="1">
        <text>Endonucleolytic cleavage to 5'-phosphomonoester.</text>
        <dbReference type="EC" id="3.1.26.4"/>
    </reaction>
</comment>
<comment type="cofactor">
    <cofactor evidence="1">
        <name>Mn(2+)</name>
        <dbReference type="ChEBI" id="CHEBI:29035"/>
    </cofactor>
    <cofactor evidence="1">
        <name>Mg(2+)</name>
        <dbReference type="ChEBI" id="CHEBI:18420"/>
    </cofactor>
    <text evidence="1">Manganese or magnesium. Binds 1 divalent metal ion per monomer in the absence of substrate. May bind a second metal ion after substrate binding.</text>
</comment>
<comment type="subcellular location">
    <subcellularLocation>
        <location evidence="1">Cytoplasm</location>
    </subcellularLocation>
</comment>
<comment type="similarity">
    <text evidence="1">Belongs to the RNase HII family.</text>
</comment>
<protein>
    <recommendedName>
        <fullName evidence="1">Ribonuclease HII</fullName>
        <shortName evidence="1">RNase HII</shortName>
        <ecNumber evidence="1">3.1.26.4</ecNumber>
    </recommendedName>
</protein>
<proteinExistence type="inferred from homology"/>
<accession>B4RVJ6</accession>
<accession>F2G289</accession>
<feature type="chain" id="PRO_1000117659" description="Ribonuclease HII">
    <location>
        <begin position="1"/>
        <end position="190"/>
    </location>
</feature>
<feature type="domain" description="RNase H type-2" evidence="2">
    <location>
        <begin position="3"/>
        <end position="190"/>
    </location>
</feature>
<feature type="binding site" evidence="1">
    <location>
        <position position="9"/>
    </location>
    <ligand>
        <name>a divalent metal cation</name>
        <dbReference type="ChEBI" id="CHEBI:60240"/>
    </ligand>
</feature>
<feature type="binding site" evidence="1">
    <location>
        <position position="10"/>
    </location>
    <ligand>
        <name>a divalent metal cation</name>
        <dbReference type="ChEBI" id="CHEBI:60240"/>
    </ligand>
</feature>
<feature type="binding site" evidence="1">
    <location>
        <position position="101"/>
    </location>
    <ligand>
        <name>a divalent metal cation</name>
        <dbReference type="ChEBI" id="CHEBI:60240"/>
    </ligand>
</feature>
<dbReference type="EC" id="3.1.26.4" evidence="1"/>
<dbReference type="EMBL" id="CP001103">
    <property type="protein sequence ID" value="AEA97223.1"/>
    <property type="molecule type" value="Genomic_DNA"/>
</dbReference>
<dbReference type="RefSeq" id="WP_012517577.1">
    <property type="nucleotide sequence ID" value="NC_011138.3"/>
</dbReference>
<dbReference type="SMR" id="B4RVJ6"/>
<dbReference type="KEGG" id="amc:MADE_1005385"/>
<dbReference type="HOGENOM" id="CLU_036532_3_2_6"/>
<dbReference type="Proteomes" id="UP000001870">
    <property type="component" value="Chromosome"/>
</dbReference>
<dbReference type="GO" id="GO:0005737">
    <property type="term" value="C:cytoplasm"/>
    <property type="evidence" value="ECO:0007669"/>
    <property type="project" value="UniProtKB-SubCell"/>
</dbReference>
<dbReference type="GO" id="GO:0032299">
    <property type="term" value="C:ribonuclease H2 complex"/>
    <property type="evidence" value="ECO:0007669"/>
    <property type="project" value="TreeGrafter"/>
</dbReference>
<dbReference type="GO" id="GO:0030145">
    <property type="term" value="F:manganese ion binding"/>
    <property type="evidence" value="ECO:0007669"/>
    <property type="project" value="UniProtKB-UniRule"/>
</dbReference>
<dbReference type="GO" id="GO:0003723">
    <property type="term" value="F:RNA binding"/>
    <property type="evidence" value="ECO:0007669"/>
    <property type="project" value="InterPro"/>
</dbReference>
<dbReference type="GO" id="GO:0004523">
    <property type="term" value="F:RNA-DNA hybrid ribonuclease activity"/>
    <property type="evidence" value="ECO:0007669"/>
    <property type="project" value="UniProtKB-UniRule"/>
</dbReference>
<dbReference type="GO" id="GO:0043137">
    <property type="term" value="P:DNA replication, removal of RNA primer"/>
    <property type="evidence" value="ECO:0007669"/>
    <property type="project" value="TreeGrafter"/>
</dbReference>
<dbReference type="GO" id="GO:0006298">
    <property type="term" value="P:mismatch repair"/>
    <property type="evidence" value="ECO:0007669"/>
    <property type="project" value="TreeGrafter"/>
</dbReference>
<dbReference type="CDD" id="cd07182">
    <property type="entry name" value="RNase_HII_bacteria_HII_like"/>
    <property type="match status" value="1"/>
</dbReference>
<dbReference type="FunFam" id="3.30.420.10:FF:000006">
    <property type="entry name" value="Ribonuclease HII"/>
    <property type="match status" value="1"/>
</dbReference>
<dbReference type="Gene3D" id="3.30.420.10">
    <property type="entry name" value="Ribonuclease H-like superfamily/Ribonuclease H"/>
    <property type="match status" value="1"/>
</dbReference>
<dbReference type="HAMAP" id="MF_00052_B">
    <property type="entry name" value="RNase_HII_B"/>
    <property type="match status" value="1"/>
</dbReference>
<dbReference type="InterPro" id="IPR022898">
    <property type="entry name" value="RNase_HII"/>
</dbReference>
<dbReference type="InterPro" id="IPR001352">
    <property type="entry name" value="RNase_HII/HIII"/>
</dbReference>
<dbReference type="InterPro" id="IPR024567">
    <property type="entry name" value="RNase_HII/HIII_dom"/>
</dbReference>
<dbReference type="InterPro" id="IPR012337">
    <property type="entry name" value="RNaseH-like_sf"/>
</dbReference>
<dbReference type="InterPro" id="IPR036397">
    <property type="entry name" value="RNaseH_sf"/>
</dbReference>
<dbReference type="NCBIfam" id="NF000595">
    <property type="entry name" value="PRK00015.1-3"/>
    <property type="match status" value="1"/>
</dbReference>
<dbReference type="NCBIfam" id="NF000596">
    <property type="entry name" value="PRK00015.1-4"/>
    <property type="match status" value="1"/>
</dbReference>
<dbReference type="PANTHER" id="PTHR10954">
    <property type="entry name" value="RIBONUCLEASE H2 SUBUNIT A"/>
    <property type="match status" value="1"/>
</dbReference>
<dbReference type="PANTHER" id="PTHR10954:SF18">
    <property type="entry name" value="RIBONUCLEASE HII"/>
    <property type="match status" value="1"/>
</dbReference>
<dbReference type="Pfam" id="PF01351">
    <property type="entry name" value="RNase_HII"/>
    <property type="match status" value="1"/>
</dbReference>
<dbReference type="SUPFAM" id="SSF53098">
    <property type="entry name" value="Ribonuclease H-like"/>
    <property type="match status" value="1"/>
</dbReference>
<dbReference type="PROSITE" id="PS51975">
    <property type="entry name" value="RNASE_H_2"/>
    <property type="match status" value="1"/>
</dbReference>
<name>RNH2_ALTMD</name>
<reference key="1">
    <citation type="journal article" date="2008" name="ISME J.">
        <title>Comparative genomics of two ecotypes of the marine planktonic copiotroph Alteromonas macleodii suggests alternative lifestyles associated with different kinds of particulate organic matter.</title>
        <authorList>
            <person name="Ivars-Martinez E."/>
            <person name="Martin-Cuadrado A.-B."/>
            <person name="D'Auria G."/>
            <person name="Mira A."/>
            <person name="Ferriera S."/>
            <person name="Johnson J."/>
            <person name="Friedman R."/>
            <person name="Rodriguez-Valera F."/>
        </authorList>
    </citation>
    <scope>NUCLEOTIDE SEQUENCE [LARGE SCALE GENOMIC DNA]</scope>
    <source>
        <strain>DSM 17117 / CIP 110805 / LMG 28347 / Deep ecotype</strain>
    </source>
</reference>